<sequence>MSRYRGPRLRVTRRLGELPGLTRKASKKSNPPGQHGQARRKRSEYAIRLEEKQKLRFNYGVSEKQLVRYVKKARAQEGSTGTNLLRLLENRLDNVCFRLGFGGTIPGSRQLVNHGHVTVNGKVLDIAGYQCKSGDVIGIKENKASKKLVEGNIEFPGLANVPPHLDLDKPKLTGKINGKCDREWVALEINELLVVEYYSRKV</sequence>
<keyword id="KW-1185">Reference proteome</keyword>
<keyword id="KW-0687">Ribonucleoprotein</keyword>
<keyword id="KW-0689">Ribosomal protein</keyword>
<keyword id="KW-0694">RNA-binding</keyword>
<keyword id="KW-0699">rRNA-binding</keyword>
<proteinExistence type="inferred from homology"/>
<evidence type="ECO:0000255" key="1">
    <source>
        <dbReference type="HAMAP-Rule" id="MF_01306"/>
    </source>
</evidence>
<evidence type="ECO:0000256" key="2">
    <source>
        <dbReference type="SAM" id="MobiDB-lite"/>
    </source>
</evidence>
<evidence type="ECO:0000305" key="3"/>
<comment type="function">
    <text evidence="1">One of the primary rRNA binding proteins, it binds directly to 16S rRNA where it nucleates assembly of the body of the 30S subunit.</text>
</comment>
<comment type="function">
    <text evidence="1">With S5 and S12 plays an important role in translational accuracy.</text>
</comment>
<comment type="subunit">
    <text evidence="1">Part of the 30S ribosomal subunit. Contacts protein S5. The interaction surface between S4 and S5 is involved in control of translational fidelity.</text>
</comment>
<comment type="similarity">
    <text evidence="1">Belongs to the universal ribosomal protein uS4 family.</text>
</comment>
<organism>
    <name type="scientific">Prochlorococcus marinus (strain MIT 9301)</name>
    <dbReference type="NCBI Taxonomy" id="167546"/>
    <lineage>
        <taxon>Bacteria</taxon>
        <taxon>Bacillati</taxon>
        <taxon>Cyanobacteriota</taxon>
        <taxon>Cyanophyceae</taxon>
        <taxon>Synechococcales</taxon>
        <taxon>Prochlorococcaceae</taxon>
        <taxon>Prochlorococcus</taxon>
    </lineage>
</organism>
<reference key="1">
    <citation type="journal article" date="2007" name="PLoS Genet.">
        <title>Patterns and implications of gene gain and loss in the evolution of Prochlorococcus.</title>
        <authorList>
            <person name="Kettler G.C."/>
            <person name="Martiny A.C."/>
            <person name="Huang K."/>
            <person name="Zucker J."/>
            <person name="Coleman M.L."/>
            <person name="Rodrigue S."/>
            <person name="Chen F."/>
            <person name="Lapidus A."/>
            <person name="Ferriera S."/>
            <person name="Johnson J."/>
            <person name="Steglich C."/>
            <person name="Church G.M."/>
            <person name="Richardson P."/>
            <person name="Chisholm S.W."/>
        </authorList>
    </citation>
    <scope>NUCLEOTIDE SEQUENCE [LARGE SCALE GENOMIC DNA]</scope>
    <source>
        <strain>MIT 9301</strain>
    </source>
</reference>
<dbReference type="EMBL" id="CP000576">
    <property type="protein sequence ID" value="ABO17052.1"/>
    <property type="molecule type" value="Genomic_DNA"/>
</dbReference>
<dbReference type="RefSeq" id="WP_011817920.1">
    <property type="nucleotide sequence ID" value="NC_009091.1"/>
</dbReference>
<dbReference type="SMR" id="A3PBC7"/>
<dbReference type="STRING" id="167546.P9301_04291"/>
<dbReference type="KEGG" id="pmg:P9301_04291"/>
<dbReference type="eggNOG" id="COG0522">
    <property type="taxonomic scope" value="Bacteria"/>
</dbReference>
<dbReference type="HOGENOM" id="CLU_092403_0_5_3"/>
<dbReference type="OrthoDB" id="9803672at2"/>
<dbReference type="Proteomes" id="UP000001430">
    <property type="component" value="Chromosome"/>
</dbReference>
<dbReference type="GO" id="GO:0015935">
    <property type="term" value="C:small ribosomal subunit"/>
    <property type="evidence" value="ECO:0007669"/>
    <property type="project" value="InterPro"/>
</dbReference>
<dbReference type="GO" id="GO:0019843">
    <property type="term" value="F:rRNA binding"/>
    <property type="evidence" value="ECO:0007669"/>
    <property type="project" value="UniProtKB-UniRule"/>
</dbReference>
<dbReference type="GO" id="GO:0003735">
    <property type="term" value="F:structural constituent of ribosome"/>
    <property type="evidence" value="ECO:0007669"/>
    <property type="project" value="InterPro"/>
</dbReference>
<dbReference type="GO" id="GO:0042274">
    <property type="term" value="P:ribosomal small subunit biogenesis"/>
    <property type="evidence" value="ECO:0007669"/>
    <property type="project" value="TreeGrafter"/>
</dbReference>
<dbReference type="GO" id="GO:0006412">
    <property type="term" value="P:translation"/>
    <property type="evidence" value="ECO:0007669"/>
    <property type="project" value="UniProtKB-UniRule"/>
</dbReference>
<dbReference type="CDD" id="cd00165">
    <property type="entry name" value="S4"/>
    <property type="match status" value="1"/>
</dbReference>
<dbReference type="FunFam" id="3.10.290.10:FF:000001">
    <property type="entry name" value="30S ribosomal protein S4"/>
    <property type="match status" value="1"/>
</dbReference>
<dbReference type="FunFam" id="1.10.1050.10:FF:000002">
    <property type="entry name" value="30S ribosomal protein S4, chloroplastic"/>
    <property type="match status" value="1"/>
</dbReference>
<dbReference type="Gene3D" id="1.10.1050.10">
    <property type="entry name" value="Ribosomal Protein S4 Delta 41, Chain A, domain 1"/>
    <property type="match status" value="1"/>
</dbReference>
<dbReference type="Gene3D" id="3.10.290.10">
    <property type="entry name" value="RNA-binding S4 domain"/>
    <property type="match status" value="1"/>
</dbReference>
<dbReference type="HAMAP" id="MF_01306_B">
    <property type="entry name" value="Ribosomal_uS4_B"/>
    <property type="match status" value="1"/>
</dbReference>
<dbReference type="InterPro" id="IPR022801">
    <property type="entry name" value="Ribosomal_uS4"/>
</dbReference>
<dbReference type="InterPro" id="IPR005709">
    <property type="entry name" value="Ribosomal_uS4_bac-type"/>
</dbReference>
<dbReference type="InterPro" id="IPR018079">
    <property type="entry name" value="Ribosomal_uS4_CS"/>
</dbReference>
<dbReference type="InterPro" id="IPR001912">
    <property type="entry name" value="Ribosomal_uS4_N"/>
</dbReference>
<dbReference type="InterPro" id="IPR002942">
    <property type="entry name" value="S4_RNA-bd"/>
</dbReference>
<dbReference type="InterPro" id="IPR036986">
    <property type="entry name" value="S4_RNA-bd_sf"/>
</dbReference>
<dbReference type="NCBIfam" id="NF003717">
    <property type="entry name" value="PRK05327.1"/>
    <property type="match status" value="1"/>
</dbReference>
<dbReference type="NCBIfam" id="TIGR01017">
    <property type="entry name" value="rpsD_bact"/>
    <property type="match status" value="1"/>
</dbReference>
<dbReference type="PANTHER" id="PTHR11831">
    <property type="entry name" value="30S 40S RIBOSOMAL PROTEIN"/>
    <property type="match status" value="1"/>
</dbReference>
<dbReference type="PANTHER" id="PTHR11831:SF4">
    <property type="entry name" value="SMALL RIBOSOMAL SUBUNIT PROTEIN US4M"/>
    <property type="match status" value="1"/>
</dbReference>
<dbReference type="Pfam" id="PF00163">
    <property type="entry name" value="Ribosomal_S4"/>
    <property type="match status" value="1"/>
</dbReference>
<dbReference type="Pfam" id="PF01479">
    <property type="entry name" value="S4"/>
    <property type="match status" value="1"/>
</dbReference>
<dbReference type="SMART" id="SM01390">
    <property type="entry name" value="Ribosomal_S4"/>
    <property type="match status" value="1"/>
</dbReference>
<dbReference type="SMART" id="SM00363">
    <property type="entry name" value="S4"/>
    <property type="match status" value="1"/>
</dbReference>
<dbReference type="SUPFAM" id="SSF55174">
    <property type="entry name" value="Alpha-L RNA-binding motif"/>
    <property type="match status" value="1"/>
</dbReference>
<dbReference type="PROSITE" id="PS00632">
    <property type="entry name" value="RIBOSOMAL_S4"/>
    <property type="match status" value="1"/>
</dbReference>
<dbReference type="PROSITE" id="PS50889">
    <property type="entry name" value="S4"/>
    <property type="match status" value="1"/>
</dbReference>
<gene>
    <name evidence="1" type="primary">rpsD</name>
    <name evidence="1" type="synonym">rps4</name>
    <name type="ordered locus">P9301_04291</name>
</gene>
<accession>A3PBC7</accession>
<name>RS4_PROM0</name>
<protein>
    <recommendedName>
        <fullName evidence="1">Small ribosomal subunit protein uS4</fullName>
    </recommendedName>
    <alternativeName>
        <fullName evidence="3">30S ribosomal protein S4</fullName>
    </alternativeName>
</protein>
<feature type="chain" id="PRO_0000293336" description="Small ribosomal subunit protein uS4">
    <location>
        <begin position="1"/>
        <end position="202"/>
    </location>
</feature>
<feature type="domain" description="S4 RNA-binding" evidence="1">
    <location>
        <begin position="90"/>
        <end position="152"/>
    </location>
</feature>
<feature type="region of interest" description="Disordered" evidence="2">
    <location>
        <begin position="1"/>
        <end position="42"/>
    </location>
</feature>
<feature type="compositionally biased region" description="Basic residues" evidence="2">
    <location>
        <begin position="1"/>
        <end position="13"/>
    </location>
</feature>